<proteinExistence type="inferred from homology"/>
<dbReference type="EC" id="2.7.8.-"/>
<dbReference type="EMBL" id="AJ938182">
    <property type="protein sequence ID" value="CAI80356.1"/>
    <property type="molecule type" value="Genomic_DNA"/>
</dbReference>
<dbReference type="RefSeq" id="WP_000098286.1">
    <property type="nucleotide sequence ID" value="NC_007622.1"/>
</dbReference>
<dbReference type="SMR" id="Q2YSL2"/>
<dbReference type="KEGG" id="sab:SAB0668"/>
<dbReference type="HOGENOM" id="CLU_021310_0_0_9"/>
<dbReference type="UniPathway" id="UPA00556"/>
<dbReference type="GO" id="GO:0005576">
    <property type="term" value="C:extracellular region"/>
    <property type="evidence" value="ECO:0007669"/>
    <property type="project" value="UniProtKB-SubCell"/>
</dbReference>
<dbReference type="GO" id="GO:0005886">
    <property type="term" value="C:plasma membrane"/>
    <property type="evidence" value="ECO:0007669"/>
    <property type="project" value="UniProtKB-SubCell"/>
</dbReference>
<dbReference type="GO" id="GO:0046872">
    <property type="term" value="F:metal ion binding"/>
    <property type="evidence" value="ECO:0007669"/>
    <property type="project" value="UniProtKB-KW"/>
</dbReference>
<dbReference type="GO" id="GO:0016740">
    <property type="term" value="F:transferase activity"/>
    <property type="evidence" value="ECO:0007669"/>
    <property type="project" value="UniProtKB-KW"/>
</dbReference>
<dbReference type="GO" id="GO:0071555">
    <property type="term" value="P:cell wall organization"/>
    <property type="evidence" value="ECO:0007669"/>
    <property type="project" value="UniProtKB-KW"/>
</dbReference>
<dbReference type="GO" id="GO:0070395">
    <property type="term" value="P:lipoteichoic acid biosynthetic process"/>
    <property type="evidence" value="ECO:0007669"/>
    <property type="project" value="UniProtKB-UniPathway"/>
</dbReference>
<dbReference type="CDD" id="cd16015">
    <property type="entry name" value="LTA_synthase"/>
    <property type="match status" value="1"/>
</dbReference>
<dbReference type="Gene3D" id="3.30.1120.170">
    <property type="match status" value="1"/>
</dbReference>
<dbReference type="Gene3D" id="3.40.720.10">
    <property type="entry name" value="Alkaline Phosphatase, subunit A"/>
    <property type="match status" value="1"/>
</dbReference>
<dbReference type="InterPro" id="IPR017850">
    <property type="entry name" value="Alkaline_phosphatase_core_sf"/>
</dbReference>
<dbReference type="InterPro" id="IPR012160">
    <property type="entry name" value="LtaS-like"/>
</dbReference>
<dbReference type="InterPro" id="IPR050448">
    <property type="entry name" value="OpgB/LTA_synthase_biosynth"/>
</dbReference>
<dbReference type="InterPro" id="IPR000917">
    <property type="entry name" value="Sulfatase_N"/>
</dbReference>
<dbReference type="PANTHER" id="PTHR47371">
    <property type="entry name" value="LIPOTEICHOIC ACID SYNTHASE"/>
    <property type="match status" value="1"/>
</dbReference>
<dbReference type="PANTHER" id="PTHR47371:SF3">
    <property type="entry name" value="PHOSPHOGLYCEROL TRANSFERASE I"/>
    <property type="match status" value="1"/>
</dbReference>
<dbReference type="Pfam" id="PF00884">
    <property type="entry name" value="Sulfatase"/>
    <property type="match status" value="1"/>
</dbReference>
<dbReference type="PIRSF" id="PIRSF005091">
    <property type="entry name" value="Mmb_sulf_HI1246"/>
    <property type="match status" value="1"/>
</dbReference>
<dbReference type="SUPFAM" id="SSF53649">
    <property type="entry name" value="Alkaline phosphatase-like"/>
    <property type="match status" value="1"/>
</dbReference>
<organism>
    <name type="scientific">Staphylococcus aureus (strain bovine RF122 / ET3-1)</name>
    <dbReference type="NCBI Taxonomy" id="273036"/>
    <lineage>
        <taxon>Bacteria</taxon>
        <taxon>Bacillati</taxon>
        <taxon>Bacillota</taxon>
        <taxon>Bacilli</taxon>
        <taxon>Bacillales</taxon>
        <taxon>Staphylococcaceae</taxon>
        <taxon>Staphylococcus</taxon>
    </lineage>
</organism>
<keyword id="KW-1003">Cell membrane</keyword>
<keyword id="KW-0961">Cell wall biogenesis/degradation</keyword>
<keyword id="KW-0464">Manganese</keyword>
<keyword id="KW-0472">Membrane</keyword>
<keyword id="KW-0479">Metal-binding</keyword>
<keyword id="KW-0964">Secreted</keyword>
<keyword id="KW-0808">Transferase</keyword>
<keyword id="KW-0812">Transmembrane</keyword>
<keyword id="KW-1133">Transmembrane helix</keyword>
<feature type="chain" id="PRO_0000305350" description="Glycerol phosphate lipoteichoic acid synthase">
    <location>
        <begin position="1"/>
        <end position="217"/>
    </location>
</feature>
<feature type="chain" id="PRO_0000305351" description="Processed glycerol phosphate lipoteichoic acid synthase">
    <location>
        <begin position="218"/>
        <end position="646"/>
    </location>
</feature>
<feature type="topological domain" description="Cytoplasmic" evidence="2">
    <location>
        <begin position="1"/>
        <end position="7"/>
    </location>
</feature>
<feature type="transmembrane region" description="Helical" evidence="2">
    <location>
        <begin position="8"/>
        <end position="28"/>
    </location>
</feature>
<feature type="topological domain" description="Extracellular" evidence="2">
    <location>
        <begin position="29"/>
        <end position="43"/>
    </location>
</feature>
<feature type="transmembrane region" description="Helical" evidence="2">
    <location>
        <begin position="44"/>
        <end position="64"/>
    </location>
</feature>
<feature type="topological domain" description="Cytoplasmic" evidence="2">
    <location>
        <begin position="65"/>
        <end position="68"/>
    </location>
</feature>
<feature type="transmembrane region" description="Helical" evidence="2">
    <location>
        <begin position="69"/>
        <end position="89"/>
    </location>
</feature>
<feature type="topological domain" description="Extracellular" evidence="2">
    <location>
        <begin position="90"/>
        <end position="119"/>
    </location>
</feature>
<feature type="transmembrane region" description="Helical" evidence="2">
    <location>
        <begin position="120"/>
        <end position="140"/>
    </location>
</feature>
<feature type="topological domain" description="Cytoplasmic" evidence="2">
    <location>
        <begin position="141"/>
        <end position="153"/>
    </location>
</feature>
<feature type="transmembrane region" description="Helical" evidence="2">
    <location>
        <begin position="154"/>
        <end position="174"/>
    </location>
</feature>
<feature type="topological domain" description="Extracellular" evidence="2">
    <location>
        <begin position="175"/>
        <end position="646"/>
    </location>
</feature>
<feature type="region of interest" description="Disordered" evidence="3">
    <location>
        <begin position="623"/>
        <end position="646"/>
    </location>
</feature>
<feature type="compositionally biased region" description="Basic and acidic residues" evidence="3">
    <location>
        <begin position="623"/>
        <end position="638"/>
    </location>
</feature>
<feature type="active site" evidence="1">
    <location>
        <position position="300"/>
    </location>
</feature>
<feature type="binding site" evidence="1">
    <location>
        <position position="255"/>
    </location>
    <ligand>
        <name>Mn(2+)</name>
        <dbReference type="ChEBI" id="CHEBI:29035"/>
    </ligand>
</feature>
<feature type="binding site" evidence="1">
    <location>
        <position position="300"/>
    </location>
    <ligand>
        <name>Mn(2+)</name>
        <dbReference type="ChEBI" id="CHEBI:29035"/>
    </ligand>
</feature>
<feature type="binding site" evidence="1">
    <location>
        <position position="416"/>
    </location>
    <ligand>
        <name>substrate</name>
    </ligand>
</feature>
<feature type="binding site" evidence="1">
    <location>
        <position position="475"/>
    </location>
    <ligand>
        <name>Mn(2+)</name>
        <dbReference type="ChEBI" id="CHEBI:29035"/>
    </ligand>
</feature>
<feature type="binding site" evidence="1">
    <location>
        <position position="476"/>
    </location>
    <ligand>
        <name>Mn(2+)</name>
        <dbReference type="ChEBI" id="CHEBI:29035"/>
    </ligand>
</feature>
<feature type="site" description="Cleavage" evidence="1">
    <location>
        <begin position="217"/>
        <end position="218"/>
    </location>
</feature>
<reference key="1">
    <citation type="journal article" date="2007" name="PLoS ONE">
        <title>Molecular correlates of host specialization in Staphylococcus aureus.</title>
        <authorList>
            <person name="Herron-Olson L."/>
            <person name="Fitzgerald J.R."/>
            <person name="Musser J.M."/>
            <person name="Kapur V."/>
        </authorList>
    </citation>
    <scope>NUCLEOTIDE SEQUENCE [LARGE SCALE GENOMIC DNA]</scope>
    <source>
        <strain>bovine RF122 / ET3-1</strain>
    </source>
</reference>
<comment type="function">
    <text evidence="1">Catalyzes the polymerization of lipoteichoic acid (LTA) polyglycerol phosphate, a reaction that presumably uses phosphatidylglycerol (PG) as substrate. Is required for staphylococcal growth and cell division process (By similarity).</text>
</comment>
<comment type="pathway">
    <text>Cell wall biogenesis; lipoteichoic acid biosynthesis.</text>
</comment>
<comment type="subcellular location">
    <subcellularLocation>
        <location evidence="4">Cell membrane</location>
        <topology evidence="4">Multi-pass membrane protein</topology>
    </subcellularLocation>
</comment>
<comment type="subcellular location">
    <molecule>Processed glycerol phosphate lipoteichoic acid synthase</molecule>
    <subcellularLocation>
        <location evidence="1">Secreted</location>
    </subcellularLocation>
</comment>
<comment type="PTM">
    <text evidence="1">Proteolytically cleaved.</text>
</comment>
<comment type="similarity">
    <text evidence="4">Belongs to the LTA synthase family.</text>
</comment>
<sequence length="646" mass="74399">MSSQKKKISLFAFFLLTVITITLKTYFSYYVDFSLGVKGLVQNLILLMNPYSLVALVLSVFLFFKGKKAFWFMFIGGFLLTFLLYANVVYFRFFSDFLTFSTLNQVGNVESMGGAVSASFKWYDFVYFIDTLVYLFILIFKTKWLDTKAFSKKFVPVVMAASVALFFLNLAFAETDRPELLTRTFDHKYLVKYLGPYNFTVYDGVKTIENNQQKALASEDDLTKVLNYTKQRQTEPNPEYYGVAKKKNIIKIHLESFQTFLINKKVNGKEVTPFLNKLSSGKQQFTYFPNFFHQTGQGKTSDSEFTMDNSLYGLPQGSAFSLKGDNTYQSLPAILDQKQGYKSDVMHGDYKTFWNRDQVYKHFGIDKFYDATYYDMSDKNVVNLGLKDKIFFKDSANYQAKMKSPFYSHLITLTNHYPFTLDEKDATIEKSNTGDATVDGYIQTARYLDEALEEYINDLKKKGLYDNSVIMIYGDHYGISENHNNAMEKLLGEKITPAKFTDLNRTGFWIKIPGKSGGINNEYAGQVDVMPTILHLAGIDTKNYLMFGTDLFSKGHNQVVPFRNGDFITKDYKYVNGKIYSNKNNELITTQPADFEKNKKQVEKDLEMSDNVLNGDLFRFYKNPDFKKVNPSKYKYETGPKANSKK</sequence>
<accession>Q2YSL2</accession>
<name>LTAS_STAAB</name>
<protein>
    <recommendedName>
        <fullName>Lipoteichoic acid synthase</fullName>
    </recommendedName>
    <component>
        <recommendedName>
            <fullName>Glycerol phosphate lipoteichoic acid synthase</fullName>
            <shortName>LTA synthase</shortName>
            <ecNumber>2.7.8.-</ecNumber>
        </recommendedName>
        <alternativeName>
            <fullName>Polyglycerol phosphate synthase</fullName>
        </alternativeName>
    </component>
    <component>
        <recommendedName>
            <fullName>Processed glycerol phosphate lipoteichoic acid synthase</fullName>
        </recommendedName>
    </component>
</protein>
<evidence type="ECO:0000250" key="1"/>
<evidence type="ECO:0000255" key="2"/>
<evidence type="ECO:0000256" key="3">
    <source>
        <dbReference type="SAM" id="MobiDB-lite"/>
    </source>
</evidence>
<evidence type="ECO:0000305" key="4"/>
<gene>
    <name type="primary">ltaS</name>
    <name type="ordered locus">SAB0668</name>
</gene>